<feature type="chain" id="PRO_0000452043" description="Cyclooctat-9-en-7-ol 5-monooxygenase">
    <location>
        <begin position="1"/>
        <end position="459"/>
    </location>
</feature>
<feature type="region of interest" description="Disordered" evidence="2">
    <location>
        <begin position="1"/>
        <end position="27"/>
    </location>
</feature>
<feature type="binding site" description="axial binding residue" evidence="1">
    <location>
        <position position="408"/>
    </location>
    <ligand>
        <name>heme</name>
        <dbReference type="ChEBI" id="CHEBI:30413"/>
    </ligand>
    <ligandPart>
        <name>Fe</name>
        <dbReference type="ChEBI" id="CHEBI:18248"/>
    </ligandPart>
</feature>
<comment type="function">
    <text evidence="3">Involved in the biosynthesis of cyclooctatin, a potent inhibitor of lysophospholipase. Catalyzes the stereospecific hydroxylation of cyclooctat-9-en-7-ol to form cyclooctat-9-ene-5,7-diol.</text>
</comment>
<comment type="catalytic activity">
    <reaction evidence="3 4">
        <text>cyclooctat-9-en-7-ol + AH2 + O2 = cyclooctat-9-ene-5,7-diol + A + H2O</text>
        <dbReference type="Rhea" id="RHEA:56820"/>
        <dbReference type="ChEBI" id="CHEBI:13193"/>
        <dbReference type="ChEBI" id="CHEBI:15377"/>
        <dbReference type="ChEBI" id="CHEBI:15379"/>
        <dbReference type="ChEBI" id="CHEBI:17499"/>
        <dbReference type="ChEBI" id="CHEBI:78352"/>
        <dbReference type="ChEBI" id="CHEBI:141020"/>
        <dbReference type="EC" id="1.14.99.61"/>
    </reaction>
    <physiologicalReaction direction="left-to-right" evidence="3 4">
        <dbReference type="Rhea" id="RHEA:56821"/>
    </physiologicalReaction>
</comment>
<comment type="cofactor">
    <cofactor evidence="1">
        <name>heme</name>
        <dbReference type="ChEBI" id="CHEBI:30413"/>
    </cofactor>
</comment>
<comment type="similarity">
    <text evidence="6">Belongs to the cytochrome P450 family.</text>
</comment>
<protein>
    <recommendedName>
        <fullName evidence="6">Cyclooctat-9-en-7-ol 5-monooxygenase</fullName>
        <ecNumber evidence="3 4">1.14.99.61</ecNumber>
    </recommendedName>
</protein>
<reference key="1">
    <citation type="journal article" date="2009" name="Chem. Biol.">
        <title>Cloning and heterologous expression of the cyclooctatin biosynthetic gene cluster afford a diterpene cyclase and two p450 hydroxylases.</title>
        <authorList>
            <person name="Kim S.Y."/>
            <person name="Zhao P."/>
            <person name="Igarashi M."/>
            <person name="Sawa R."/>
            <person name="Tomita T."/>
            <person name="Nishiyama M."/>
            <person name="Kuzuyama T."/>
        </authorList>
    </citation>
    <scope>NUCLEOTIDE SEQUENCE [GENOMIC DNA]</scope>
    <scope>FUNCTION</scope>
    <scope>CATALYTIC ACTIVITY</scope>
    <source>
        <strain>MI614-43F2</strain>
    </source>
</reference>
<reference key="2">
    <citation type="journal article" date="2016" name="Microb. Cell Fact.">
        <title>Identification, characterization and molecular adaptation of class I redox systems for the production of hydroxylated diterpenoids.</title>
        <authorList>
            <person name="Goerner C."/>
            <person name="Schrepfer P."/>
            <person name="Redai V."/>
            <person name="Wallrapp F."/>
            <person name="Loll B."/>
            <person name="Eisenreich W."/>
            <person name="Haslbeck M."/>
            <person name="Brueck T."/>
        </authorList>
    </citation>
    <scope>CATALYTIC ACTIVITY</scope>
</reference>
<organism>
    <name type="scientific">Streptomyces melanosporofaciens</name>
    <dbReference type="NCBI Taxonomy" id="67327"/>
    <lineage>
        <taxon>Bacteria</taxon>
        <taxon>Bacillati</taxon>
        <taxon>Actinomycetota</taxon>
        <taxon>Actinomycetes</taxon>
        <taxon>Kitasatosporales</taxon>
        <taxon>Streptomycetaceae</taxon>
        <taxon>Streptomyces</taxon>
        <taxon>Streptomyces violaceusniger group</taxon>
    </lineage>
</organism>
<keyword id="KW-0349">Heme</keyword>
<keyword id="KW-0408">Iron</keyword>
<keyword id="KW-0479">Metal-binding</keyword>
<keyword id="KW-0503">Monooxygenase</keyword>
<keyword id="KW-0560">Oxidoreductase</keyword>
<name>COTB3_STRMJ</name>
<dbReference type="EC" id="1.14.99.61" evidence="3 4"/>
<dbReference type="EMBL" id="AB448947">
    <property type="protein sequence ID" value="BAI44339.1"/>
    <property type="molecule type" value="Genomic_DNA"/>
</dbReference>
<dbReference type="SMR" id="C9K1X6"/>
<dbReference type="KEGG" id="ag:BAI44339"/>
<dbReference type="BioCyc" id="MetaCyc:MONOMER-18587"/>
<dbReference type="BRENDA" id="1.14.99.61">
    <property type="organism ID" value="13958"/>
</dbReference>
<dbReference type="GO" id="GO:0020037">
    <property type="term" value="F:heme binding"/>
    <property type="evidence" value="ECO:0007669"/>
    <property type="project" value="InterPro"/>
</dbReference>
<dbReference type="GO" id="GO:0005506">
    <property type="term" value="F:iron ion binding"/>
    <property type="evidence" value="ECO:0007669"/>
    <property type="project" value="InterPro"/>
</dbReference>
<dbReference type="GO" id="GO:0004497">
    <property type="term" value="F:monooxygenase activity"/>
    <property type="evidence" value="ECO:0007669"/>
    <property type="project" value="UniProtKB-KW"/>
</dbReference>
<dbReference type="GO" id="GO:0016705">
    <property type="term" value="F:oxidoreductase activity, acting on paired donors, with incorporation or reduction of molecular oxygen"/>
    <property type="evidence" value="ECO:0007669"/>
    <property type="project" value="InterPro"/>
</dbReference>
<dbReference type="CDD" id="cd11049">
    <property type="entry name" value="CYP170A1-like"/>
    <property type="match status" value="1"/>
</dbReference>
<dbReference type="Gene3D" id="1.10.630.10">
    <property type="entry name" value="Cytochrome P450"/>
    <property type="match status" value="1"/>
</dbReference>
<dbReference type="InterPro" id="IPR001128">
    <property type="entry name" value="Cyt_P450"/>
</dbReference>
<dbReference type="InterPro" id="IPR017972">
    <property type="entry name" value="Cyt_P450_CS"/>
</dbReference>
<dbReference type="InterPro" id="IPR002401">
    <property type="entry name" value="Cyt_P450_E_grp-I"/>
</dbReference>
<dbReference type="InterPro" id="IPR036396">
    <property type="entry name" value="Cyt_P450_sf"/>
</dbReference>
<dbReference type="InterPro" id="IPR050196">
    <property type="entry name" value="Cytochrome_P450_Monoox"/>
</dbReference>
<dbReference type="PANTHER" id="PTHR24291:SF50">
    <property type="entry name" value="BIFUNCTIONAL ALBAFLAVENONE MONOOXYGENASE_TERPENE SYNTHASE"/>
    <property type="match status" value="1"/>
</dbReference>
<dbReference type="PANTHER" id="PTHR24291">
    <property type="entry name" value="CYTOCHROME P450 FAMILY 4"/>
    <property type="match status" value="1"/>
</dbReference>
<dbReference type="Pfam" id="PF00067">
    <property type="entry name" value="p450"/>
    <property type="match status" value="1"/>
</dbReference>
<dbReference type="PRINTS" id="PR00463">
    <property type="entry name" value="EP450I"/>
</dbReference>
<dbReference type="PRINTS" id="PR00385">
    <property type="entry name" value="P450"/>
</dbReference>
<dbReference type="SUPFAM" id="SSF48264">
    <property type="entry name" value="Cytochrome P450"/>
    <property type="match status" value="1"/>
</dbReference>
<dbReference type="PROSITE" id="PS00086">
    <property type="entry name" value="CYTOCHROME_P450"/>
    <property type="match status" value="1"/>
</dbReference>
<accession>C9K1X6</accession>
<evidence type="ECO:0000250" key="1">
    <source>
        <dbReference type="UniProtKB" id="Q9K498"/>
    </source>
</evidence>
<evidence type="ECO:0000256" key="2">
    <source>
        <dbReference type="SAM" id="MobiDB-lite"/>
    </source>
</evidence>
<evidence type="ECO:0000269" key="3">
    <source>
    </source>
</evidence>
<evidence type="ECO:0000269" key="4">
    <source>
    </source>
</evidence>
<evidence type="ECO:0000303" key="5">
    <source>
    </source>
</evidence>
<evidence type="ECO:0000305" key="6"/>
<proteinExistence type="evidence at protein level"/>
<sequence length="459" mass="50687">MRERGPVTPAKSSAPPERPWTTGTAPGSVPLLGHTMALWRRPLQFLASLPAHGDLVEVRLGPSRAYLACHPELVRQVLLNPRVFDKGGVFDKARQLLGNSLSVSRGEDHRYQRRMIQPAFHTPKIAAYTAAVADDTRAAIGSWEPGRTLDISDTMHALLMRVAARTLFSTGIDEATIDEARHCLRIVSDGIYKRTMAPLGIMEKLPTPGNRRYDRANARLRQIVDEMIRERRRSGADHGDLLSTLLRAEHPETGKGLDDGEVLDQVVTFLVAGSETTASTLAFVFHLLGAHPEVEKRVHAEIDEILEGRSPTFEDLPSLEYTRGVITESLRLYPPSWMAMRVTAAETELGGRTVPAGTMILYSAQALHHNPELFPDPERFDPERWLGDRAKEVERGALLPFGAGSHKCIGDVLALTETALIVATIASRWRLRPVPGTTLRPEPKATLEPGPLPMVCEPR</sequence>
<gene>
    <name evidence="5" type="primary">cotB3</name>
</gene>